<evidence type="ECO:0000255" key="1"/>
<evidence type="ECO:0000255" key="2">
    <source>
        <dbReference type="PROSITE-ProRule" id="PRU00498"/>
    </source>
</evidence>
<evidence type="ECO:0000255" key="3">
    <source>
        <dbReference type="PROSITE-ProRule" id="PRU00718"/>
    </source>
</evidence>
<evidence type="ECO:0000269" key="4">
    <source>
    </source>
</evidence>
<evidence type="ECO:0000269" key="5">
    <source>
    </source>
</evidence>
<evidence type="ECO:0000269" key="6">
    <source>
    </source>
</evidence>
<evidence type="ECO:0000269" key="7">
    <source>
    </source>
</evidence>
<evidence type="ECO:0000269" key="8">
    <source>
    </source>
</evidence>
<evidence type="ECO:0000303" key="9">
    <source>
    </source>
</evidence>
<evidence type="ECO:0000303" key="10">
    <source>
    </source>
</evidence>
<evidence type="ECO:0000305" key="11"/>
<evidence type="ECO:0000305" key="12">
    <source>
    </source>
</evidence>
<comment type="function">
    <text evidence="4 5 6 7 8">FAD-linked oxidoreductase; part of the gene cluster that mediates the biosynthesis of the antitumor fumiquinazolines that confer a dual-usage capability to defend against phagocytes in the environment and animal hosts (PubMed:20225828, PubMed:20804163, PubMed:21899262, PubMed:24612080, PubMed:33705521). The simplest member is fumiquinazoline F (FQF) with a 6-6-6 tricyclic core derived from anthranilic acid (Ant), tryptophan (Trp), and alanine (Ala) (PubMed:20225828). The trimodular NRPS fmqA is responsible for FQF formation (PubMed:20225828). Modules 1, 2 and 3 of fmqA are predicted to activate and load Ant, Trp and Ala, respectively, providing for the assembly of an Ant-Trp-Ala-S-enzyme intermediate that would undergo double cyclization for chain release and generation of the tricyclic 6-6-6 product fumiquinazoline F (PubMed:20225828). The presence of an E domain predicted for module 2 of fmqA is consistent with epimerization of L-Trp to D-Trp during assembly to generate the R-stereocenter at C14 of FQF (PubMed:20225828). The FAD-dependent monooxygenase fmqB and the monomodular NRPS fmqC then maturate FQF to FQA (PubMed:20804163). FmqB oxidizes the 2',3'-double bond of the indole side chain of FQF, and fmqC activates L-Ala as the adenylate, installs it as the pantetheinyl thioester on its carrier protein domain, and acylates the oxidized indole for subsequent intramolecular cyclization to create the 6-5-5-imidazolindolone of FQA (PubMed:20804163). The FAD-linked oxidoreductase fmqD introduces a third layer of scaffold complexity by converting FQA to the spirohemiaminal FQC, presumably by catalyzing the formation of a transient imine within the pyrazinone ring (PubMed:21899262). FQC subsequently converts nonenzymatically to the known cyclic aminal FQD (PubMed:21899262).</text>
</comment>
<comment type="pathway">
    <text evidence="6 7">Alkaloid biosynthesis.</text>
</comment>
<comment type="subcellular location">
    <subcellularLocation>
        <location evidence="7 12">Secreted</location>
    </subcellularLocation>
    <subcellularLocation>
        <location evidence="7">Secreted</location>
        <location evidence="7">Cell wall</location>
    </subcellularLocation>
    <text evidence="7">Localizes to the cell wall of the conidia and In to both the cell wall and septa in the hyphae (PubMed:24612080).</text>
</comment>
<comment type="induction">
    <text evidence="7 8">Expression is positively regulated by brlA, a conidiation-specific transcription factor involved in the early stage of asexual development and necessary for conidiophore formation (PubMed:24612080). Expression is also induced by the cell wall integrity (CWI) signaling pathway that includes the mitogen-activated protein kinase mpkA and the transcription factor rlmA (PubMed:33705521). Expression is negatively regulated by the transcription factor sebA (PubMed:33705521).</text>
</comment>
<comment type="disruption phenotype">
    <text evidence="7">Leads to a significant decrease but not complete loss of fumiquinazoline C production and accumulates fumiquinazoline A (PubMed:24612080).</text>
</comment>
<comment type="similarity">
    <text evidence="11">Belongs to the oxygen-dependent FAD-linked oxidoreductase family.</text>
</comment>
<reference key="1">
    <citation type="journal article" date="2005" name="Nature">
        <title>Genomic sequence of the pathogenic and allergenic filamentous fungus Aspergillus fumigatus.</title>
        <authorList>
            <person name="Nierman W.C."/>
            <person name="Pain A."/>
            <person name="Anderson M.J."/>
            <person name="Wortman J.R."/>
            <person name="Kim H.S."/>
            <person name="Arroyo J."/>
            <person name="Berriman M."/>
            <person name="Abe K."/>
            <person name="Archer D.B."/>
            <person name="Bermejo C."/>
            <person name="Bennett J.W."/>
            <person name="Bowyer P."/>
            <person name="Chen D."/>
            <person name="Collins M."/>
            <person name="Coulsen R."/>
            <person name="Davies R."/>
            <person name="Dyer P.S."/>
            <person name="Farman M.L."/>
            <person name="Fedorova N."/>
            <person name="Fedorova N.D."/>
            <person name="Feldblyum T.V."/>
            <person name="Fischer R."/>
            <person name="Fosker N."/>
            <person name="Fraser A."/>
            <person name="Garcia J.L."/>
            <person name="Garcia M.J."/>
            <person name="Goble A."/>
            <person name="Goldman G.H."/>
            <person name="Gomi K."/>
            <person name="Griffith-Jones S."/>
            <person name="Gwilliam R."/>
            <person name="Haas B.J."/>
            <person name="Haas H."/>
            <person name="Harris D.E."/>
            <person name="Horiuchi H."/>
            <person name="Huang J."/>
            <person name="Humphray S."/>
            <person name="Jimenez J."/>
            <person name="Keller N."/>
            <person name="Khouri H."/>
            <person name="Kitamoto K."/>
            <person name="Kobayashi T."/>
            <person name="Konzack S."/>
            <person name="Kulkarni R."/>
            <person name="Kumagai T."/>
            <person name="Lafton A."/>
            <person name="Latge J.-P."/>
            <person name="Li W."/>
            <person name="Lord A."/>
            <person name="Lu C."/>
            <person name="Majoros W.H."/>
            <person name="May G.S."/>
            <person name="Miller B.L."/>
            <person name="Mohamoud Y."/>
            <person name="Molina M."/>
            <person name="Monod M."/>
            <person name="Mouyna I."/>
            <person name="Mulligan S."/>
            <person name="Murphy L.D."/>
            <person name="O'Neil S."/>
            <person name="Paulsen I."/>
            <person name="Penalva M.A."/>
            <person name="Pertea M."/>
            <person name="Price C."/>
            <person name="Pritchard B.L."/>
            <person name="Quail M.A."/>
            <person name="Rabbinowitsch E."/>
            <person name="Rawlins N."/>
            <person name="Rajandream M.A."/>
            <person name="Reichard U."/>
            <person name="Renauld H."/>
            <person name="Robson G.D."/>
            <person name="Rodriguez de Cordoba S."/>
            <person name="Rodriguez-Pena J.M."/>
            <person name="Ronning C.M."/>
            <person name="Rutter S."/>
            <person name="Salzberg S.L."/>
            <person name="Sanchez M."/>
            <person name="Sanchez-Ferrero J.C."/>
            <person name="Saunders D."/>
            <person name="Seeger K."/>
            <person name="Squares R."/>
            <person name="Squares S."/>
            <person name="Takeuchi M."/>
            <person name="Tekaia F."/>
            <person name="Turner G."/>
            <person name="Vazquez de Aldana C.R."/>
            <person name="Weidman J."/>
            <person name="White O."/>
            <person name="Woodward J.R."/>
            <person name="Yu J.-H."/>
            <person name="Fraser C.M."/>
            <person name="Galagan J.E."/>
            <person name="Asai K."/>
            <person name="Machida M."/>
            <person name="Hall N."/>
            <person name="Barrell B.G."/>
            <person name="Denning D.W."/>
        </authorList>
    </citation>
    <scope>NUCLEOTIDE SEQUENCE [LARGE SCALE GENOMIC DNA]</scope>
    <source>
        <strain>ATCC MYA-4609 / CBS 101355 / FGSC A1100 / Af293</strain>
    </source>
</reference>
<reference key="2">
    <citation type="journal article" date="2010" name="Biochemistry">
        <title>Anthranilate-activating modules from fungal nonribosomal peptide assembly lines.</title>
        <authorList>
            <person name="Ames B.D."/>
            <person name="Walsh C.T."/>
        </authorList>
    </citation>
    <scope>FUNCTION</scope>
</reference>
<reference key="3">
    <citation type="journal article" date="2010" name="Biochemistry">
        <title>Enzymatic processing of fumiquinazoline F: a tandem oxidative-acylation strategy for the generation of multicyclic scaffolds in fungal indole alkaloid biosynthesis.</title>
        <authorList>
            <person name="Ames B.D."/>
            <person name="Liu X."/>
            <person name="Walsh C.T."/>
        </authorList>
    </citation>
    <scope>FUNCTION</scope>
</reference>
<reference key="4">
    <citation type="journal article" date="2011" name="Biochemistry">
        <title>Complexity generation in fungal peptidyl alkaloid biosynthesis: oxidation of fumiquinazoline A to the heptacyclic hemiaminal fumiquinazoline C by the flavoenzyme Af12070 from Aspergillus fumigatus.</title>
        <authorList>
            <person name="Ames B.D."/>
            <person name="Haynes S.W."/>
            <person name="Gao X."/>
            <person name="Evans B.S."/>
            <person name="Kelleher N.L."/>
            <person name="Tang Y."/>
            <person name="Walsh C.T."/>
        </authorList>
    </citation>
    <scope>FUNCTION</scope>
    <scope>SUBCELLULAR LOCATION</scope>
    <scope>CATALYTIC ACTIVITY</scope>
    <scope>PATHWAY</scope>
</reference>
<reference key="5">
    <citation type="journal article" date="2014" name="Cell. Microbiol.">
        <title>Co-ordination between BrlA regulation and secretion of the oxidoreductase FmqD directs selective accumulation of fumiquinazoline C to conidial tissues in Aspergillus fumigatus.</title>
        <authorList>
            <person name="Lim F.Y."/>
            <person name="Ames B."/>
            <person name="Walsh C.T."/>
            <person name="Keller N.P."/>
        </authorList>
    </citation>
    <scope>FUNCTION</scope>
    <scope>DISRUPTION PHENOTYPE</scope>
    <scope>INDUCTION</scope>
    <scope>SUBCELLULAR LOCATION</scope>
    <scope>PATHWAY</scope>
</reference>
<reference key="6">
    <citation type="journal article" date="2021" name="Genetics">
        <title>Transcriptional control of the production of Aspergillus fumigatus conidia-borne secondary metabolite fumiquinazoline C important for phagocytosis protection.</title>
        <authorList>
            <person name="Rocha M.C."/>
            <person name="Fabri J.H.T.M."/>
            <person name="da Silva L.P."/>
            <person name="Angolini C.F.F."/>
            <person name="Bertolini M.C."/>
            <person name="da Cunha A.F."/>
            <person name="Valiante V."/>
            <person name="Goldman G.H."/>
            <person name="Fill T.P."/>
            <person name="Malavazi I."/>
        </authorList>
    </citation>
    <scope>FUNCTION</scope>
    <scope>INDUCTION</scope>
</reference>
<accession>Q4WLW6</accession>
<sequence length="497" mass="54550">MQYIPFLISGLVPVALSKSLFEATSNTRIDGNDIAAIFGPVLTPEAHIFLPSDGDYDDNVMARWSTFNDPSYVATVKPATETDVQAIREYQVSTAASHNITFFATGGGHGVKLNFGNVQNAINIELSLLDFIDLDLDNEVVTIGPGVENAQLYDLLSSVGKETALTGERCVNTIGPTLGGGLGPLYGIRGPQVDSLVSARLVTASGDVITVSRSENRDLFWAIRGAGANFGIVTSATYRIYDQTNGGMAVSAQFAFAPAVNRSVFDLMESMNDEYPPGMSGGMILSYNHTTNEPSVQWNLLFMGSNEDAQPWLDKIQALGPIDSSIRNVPWHRRDEPEVPYCERGQHYILYNLNLRRTDAATLQSYFDSFVDFSSKNPWFDCDLMYERQATDAALAVPLSERGVGPWRDSKINANFLVVTPSEEYDEAADAFVRPFMDRFQAVMGFDTLHVYVNEALGDEGPASWYGEENLPRLVALKQQWDPENKFGAGAPIPLSL</sequence>
<keyword id="KW-0134">Cell wall</keyword>
<keyword id="KW-0274">FAD</keyword>
<keyword id="KW-0285">Flavoprotein</keyword>
<keyword id="KW-0325">Glycoprotein</keyword>
<keyword id="KW-0560">Oxidoreductase</keyword>
<keyword id="KW-1185">Reference proteome</keyword>
<keyword id="KW-0964">Secreted</keyword>
<keyword id="KW-0732">Signal</keyword>
<feature type="signal peptide" evidence="1">
    <location>
        <begin position="1"/>
        <end position="17"/>
    </location>
</feature>
<feature type="chain" id="PRO_5004245690" description="FAD-linked oxidoreductase fmqD">
    <location>
        <begin position="18"/>
        <end position="497"/>
    </location>
</feature>
<feature type="domain" description="FAD-binding PCMH-type" evidence="3">
    <location>
        <begin position="68"/>
        <end position="243"/>
    </location>
</feature>
<feature type="glycosylation site" description="N-linked (GlcNAc...) asparagine" evidence="2">
    <location>
        <position position="99"/>
    </location>
</feature>
<feature type="glycosylation site" description="N-linked (GlcNAc...) asparagine" evidence="2">
    <location>
        <position position="261"/>
    </location>
</feature>
<feature type="glycosylation site" description="N-linked (GlcNAc...) asparagine" evidence="2">
    <location>
        <position position="288"/>
    </location>
</feature>
<protein>
    <recommendedName>
        <fullName evidence="9">FAD-linked oxidoreductase fmqD</fullName>
        <ecNumber evidence="6">1.-.-.-</ecNumber>
    </recommendedName>
    <alternativeName>
        <fullName evidence="10">Fumiquinazoline biosynthesis cluster protein D</fullName>
    </alternativeName>
</protein>
<name>FMQD_ASPFU</name>
<dbReference type="EC" id="1.-.-.-" evidence="6"/>
<dbReference type="EMBL" id="AAHF01000006">
    <property type="protein sequence ID" value="EAL89048.1"/>
    <property type="molecule type" value="Genomic_DNA"/>
</dbReference>
<dbReference type="RefSeq" id="XP_751086.1">
    <property type="nucleotide sequence ID" value="XM_745993.1"/>
</dbReference>
<dbReference type="SMR" id="Q4WLW6"/>
<dbReference type="STRING" id="330879.Q4WLW6"/>
<dbReference type="GlyCosmos" id="Q4WLW6">
    <property type="glycosylation" value="3 sites, No reported glycans"/>
</dbReference>
<dbReference type="EnsemblFungi" id="EAL89048">
    <property type="protein sequence ID" value="EAL89048"/>
    <property type="gene ID" value="AFUA_6G12070"/>
</dbReference>
<dbReference type="GeneID" id="3508391"/>
<dbReference type="KEGG" id="afm:AFUA_6G12070"/>
<dbReference type="eggNOG" id="ENOG502SJ3M">
    <property type="taxonomic scope" value="Eukaryota"/>
</dbReference>
<dbReference type="HOGENOM" id="CLU_018354_0_0_1"/>
<dbReference type="InParanoid" id="Q4WLW6"/>
<dbReference type="OMA" id="MNIEGFY"/>
<dbReference type="OrthoDB" id="415825at2759"/>
<dbReference type="BioCyc" id="MetaCyc:MONOMER-18844"/>
<dbReference type="Proteomes" id="UP000002530">
    <property type="component" value="Chromosome 6"/>
</dbReference>
<dbReference type="GO" id="GO:0005576">
    <property type="term" value="C:extracellular region"/>
    <property type="evidence" value="ECO:0007669"/>
    <property type="project" value="UniProtKB-SubCell"/>
</dbReference>
<dbReference type="GO" id="GO:0071949">
    <property type="term" value="F:FAD binding"/>
    <property type="evidence" value="ECO:0007669"/>
    <property type="project" value="InterPro"/>
</dbReference>
<dbReference type="GO" id="GO:0016491">
    <property type="term" value="F:oxidoreductase activity"/>
    <property type="evidence" value="ECO:0007669"/>
    <property type="project" value="UniProtKB-KW"/>
</dbReference>
<dbReference type="GO" id="GO:1900781">
    <property type="term" value="P:fumiquinazoline C biosynthetic process"/>
    <property type="evidence" value="ECO:0000314"/>
    <property type="project" value="GO_Central"/>
</dbReference>
<dbReference type="Gene3D" id="3.30.465.10">
    <property type="match status" value="1"/>
</dbReference>
<dbReference type="Gene3D" id="3.40.462.20">
    <property type="match status" value="1"/>
</dbReference>
<dbReference type="InterPro" id="IPR012951">
    <property type="entry name" value="BBE"/>
</dbReference>
<dbReference type="InterPro" id="IPR016166">
    <property type="entry name" value="FAD-bd_PCMH"/>
</dbReference>
<dbReference type="InterPro" id="IPR036318">
    <property type="entry name" value="FAD-bd_PCMH-like_sf"/>
</dbReference>
<dbReference type="InterPro" id="IPR016169">
    <property type="entry name" value="FAD-bd_PCMH_sub2"/>
</dbReference>
<dbReference type="InterPro" id="IPR016164">
    <property type="entry name" value="FAD-linked_Oxase-like_C"/>
</dbReference>
<dbReference type="InterPro" id="IPR050416">
    <property type="entry name" value="FAD-linked_Oxidoreductase"/>
</dbReference>
<dbReference type="InterPro" id="IPR006094">
    <property type="entry name" value="Oxid_FAD_bind_N"/>
</dbReference>
<dbReference type="PANTHER" id="PTHR42973">
    <property type="entry name" value="BINDING OXIDOREDUCTASE, PUTATIVE (AFU_ORTHOLOGUE AFUA_1G17690)-RELATED"/>
    <property type="match status" value="1"/>
</dbReference>
<dbReference type="PANTHER" id="PTHR42973:SF32">
    <property type="entry name" value="FAD-LINKED OXIDOREDUCTASE AFOF"/>
    <property type="match status" value="1"/>
</dbReference>
<dbReference type="Pfam" id="PF08031">
    <property type="entry name" value="BBE"/>
    <property type="match status" value="1"/>
</dbReference>
<dbReference type="Pfam" id="PF01565">
    <property type="entry name" value="FAD_binding_4"/>
    <property type="match status" value="1"/>
</dbReference>
<dbReference type="SUPFAM" id="SSF56176">
    <property type="entry name" value="FAD-binding/transporter-associated domain-like"/>
    <property type="match status" value="1"/>
</dbReference>
<dbReference type="SUPFAM" id="SSF55103">
    <property type="entry name" value="FAD-linked oxidases, C-terminal domain"/>
    <property type="match status" value="1"/>
</dbReference>
<dbReference type="PROSITE" id="PS51387">
    <property type="entry name" value="FAD_PCMH"/>
    <property type="match status" value="1"/>
</dbReference>
<gene>
    <name evidence="10" type="primary">fmqD</name>
    <name type="ORF">AFUA_6G12070</name>
</gene>
<organism>
    <name type="scientific">Aspergillus fumigatus (strain ATCC MYA-4609 / CBS 101355 / FGSC A1100 / Af293)</name>
    <name type="common">Neosartorya fumigata</name>
    <dbReference type="NCBI Taxonomy" id="330879"/>
    <lineage>
        <taxon>Eukaryota</taxon>
        <taxon>Fungi</taxon>
        <taxon>Dikarya</taxon>
        <taxon>Ascomycota</taxon>
        <taxon>Pezizomycotina</taxon>
        <taxon>Eurotiomycetes</taxon>
        <taxon>Eurotiomycetidae</taxon>
        <taxon>Eurotiales</taxon>
        <taxon>Aspergillaceae</taxon>
        <taxon>Aspergillus</taxon>
        <taxon>Aspergillus subgen. Fumigati</taxon>
    </lineage>
</organism>
<proteinExistence type="evidence at protein level"/>